<feature type="transit peptide" description="Chloroplast" evidence="3">
    <location>
        <begin position="1"/>
        <end position="76"/>
    </location>
</feature>
<feature type="chain" id="PRO_0000419345" description="Photosystem II 5 kDa protein, chloroplastic" evidence="3">
    <location>
        <begin position="77"/>
        <end position="106"/>
    </location>
</feature>
<feature type="disulfide bond" evidence="3">
    <location>
        <begin position="95"/>
        <end position="104"/>
    </location>
</feature>
<dbReference type="EMBL" id="FN008610">
    <property type="status" value="NOT_ANNOTATED_CDS"/>
    <property type="molecule type" value="mRNA"/>
</dbReference>
<dbReference type="SMR" id="B3EWI4"/>
<dbReference type="GO" id="GO:0009535">
    <property type="term" value="C:chloroplast thylakoid membrane"/>
    <property type="evidence" value="ECO:0007669"/>
    <property type="project" value="UniProtKB-SubCell"/>
</dbReference>
<dbReference type="GO" id="GO:0009523">
    <property type="term" value="C:photosystem II"/>
    <property type="evidence" value="ECO:0007669"/>
    <property type="project" value="UniProtKB-KW"/>
</dbReference>
<dbReference type="GO" id="GO:0015979">
    <property type="term" value="P:photosynthesis"/>
    <property type="evidence" value="ECO:0007669"/>
    <property type="project" value="UniProtKB-KW"/>
</dbReference>
<dbReference type="InterPro" id="IPR040296">
    <property type="entry name" value="PSBT"/>
</dbReference>
<dbReference type="PANTHER" id="PTHR34940:SF4">
    <property type="entry name" value="OS02G0581100 PROTEIN"/>
    <property type="match status" value="1"/>
</dbReference>
<dbReference type="PANTHER" id="PTHR34940">
    <property type="entry name" value="PHOTOSYSTEM II 5 KDA PROTEIN, CHLOROPLASTIC"/>
    <property type="match status" value="1"/>
</dbReference>
<proteinExistence type="evidence at protein level"/>
<keyword id="KW-0150">Chloroplast</keyword>
<keyword id="KW-0903">Direct protein sequencing</keyword>
<keyword id="KW-1015">Disulfide bond</keyword>
<keyword id="KW-0472">Membrane</keyword>
<keyword id="KW-0602">Photosynthesis</keyword>
<keyword id="KW-0604">Photosystem II</keyword>
<keyword id="KW-0934">Plastid</keyword>
<keyword id="KW-0793">Thylakoid</keyword>
<keyword id="KW-0809">Transit peptide</keyword>
<comment type="function">
    <text evidence="1">May be a component of the oxygen-evolving complex.</text>
</comment>
<comment type="subcellular location">
    <subcellularLocation>
        <location evidence="1">Plastid</location>
        <location evidence="1">Chloroplast thylakoid membrane</location>
    </subcellularLocation>
    <text evidence="1">Associated with the photosystem II complex.</text>
</comment>
<comment type="tissue specificity">
    <text evidence="3">Expressed in midvein, lamina and periphery of leaves (at protein level).</text>
</comment>
<comment type="PTM">
    <text evidence="3">Disulfide bond.</text>
</comment>
<comment type="mass spectrometry"/>
<reference evidence="5" key="1">
    <citation type="journal article" date="2010" name="Plant J.">
        <title>Phosphate systemically inhibits development of arbuscular mycorrhiza in Petunia hybrida and represses genes involved in mycorrhizal functioning.</title>
        <authorList>
            <person name="Breuillin F."/>
            <person name="Schramm J."/>
            <person name="Hajirezaei M."/>
            <person name="Ahkami A."/>
            <person name="Favre P."/>
            <person name="Druege U."/>
            <person name="Hause B."/>
            <person name="Bucher M."/>
            <person name="Kretzschmar T."/>
            <person name="Bossolini E."/>
            <person name="Kuhlemeier C."/>
            <person name="Martinoia E."/>
            <person name="Franken P."/>
            <person name="Scholz U."/>
            <person name="Reinhardt D."/>
        </authorList>
    </citation>
    <scope>NUCLEOTIDE SEQUENCE [MRNA]</scope>
    <source>
        <tissue evidence="2">Root</tissue>
    </source>
</reference>
<reference evidence="5" key="2">
    <citation type="journal article" date="2012" name="J. Biol. Chem.">
        <title>Cyclotides associate with leaf vasculature and are the products of a novel precursor in Petunia (Solanaceae).</title>
        <authorList>
            <person name="Poth A.G."/>
            <person name="Mylne J.S."/>
            <person name="Grassl J."/>
            <person name="Lyons R.E."/>
            <person name="Millar A.H."/>
            <person name="Colgrave M.L."/>
            <person name="Craik D.J."/>
        </authorList>
    </citation>
    <scope>PROTEIN SEQUENCE OF 77-106</scope>
    <scope>TISSUE SPECIFICITY</scope>
    <scope>DISULFIDE BOND</scope>
    <scope>MASS SPECTROMETRY</scope>
    <source>
        <tissue evidence="3">Leaf</tissue>
    </source>
</reference>
<evidence type="ECO:0000250" key="1">
    <source>
        <dbReference type="UniProtKB" id="P31336"/>
    </source>
</evidence>
<evidence type="ECO:0000269" key="2">
    <source>
    </source>
</evidence>
<evidence type="ECO:0000269" key="3">
    <source>
    </source>
</evidence>
<evidence type="ECO:0000303" key="4">
    <source>
    </source>
</evidence>
<evidence type="ECO:0000305" key="5"/>
<protein>
    <recommendedName>
        <fullName evidence="4">Photosystem II 5 kDa protein, chloroplastic</fullName>
    </recommendedName>
</protein>
<accession>B3EWI4</accession>
<organism>
    <name type="scientific">Petunia hybrida</name>
    <name type="common">Petunia</name>
    <dbReference type="NCBI Taxonomy" id="4102"/>
    <lineage>
        <taxon>Eukaryota</taxon>
        <taxon>Viridiplantae</taxon>
        <taxon>Streptophyta</taxon>
        <taxon>Embryophyta</taxon>
        <taxon>Tracheophyta</taxon>
        <taxon>Spermatophyta</taxon>
        <taxon>Magnoliopsida</taxon>
        <taxon>eudicotyledons</taxon>
        <taxon>Gunneridae</taxon>
        <taxon>Pentapetalae</taxon>
        <taxon>asterids</taxon>
        <taxon>lamiids</taxon>
        <taxon>Solanales</taxon>
        <taxon>Solanaceae</taxon>
        <taxon>Petunioideae</taxon>
        <taxon>Petunia</taxon>
    </lineage>
</organism>
<name>PST2_PETHY</name>
<sequence>MASITMMSSFLGGSTVAPAKVPSANRRGVVMVKAMHEGENNVVISKNEESKNSGRRELFFAMAAAAACSVAKTAMADEEPKRGTPEAKKKYSSVCVTNPTARICRY</sequence>